<proteinExistence type="inferred from homology"/>
<feature type="chain" id="PRO_1000138327" description="UPF0434 protein YcaR">
    <location>
        <begin position="1"/>
        <end position="60"/>
    </location>
</feature>
<reference key="1">
    <citation type="journal article" date="2011" name="J. Bacteriol.">
        <title>Comparative genomics of 28 Salmonella enterica isolates: evidence for CRISPR-mediated adaptive sublineage evolution.</title>
        <authorList>
            <person name="Fricke W.F."/>
            <person name="Mammel M.K."/>
            <person name="McDermott P.F."/>
            <person name="Tartera C."/>
            <person name="White D.G."/>
            <person name="Leclerc J.E."/>
            <person name="Ravel J."/>
            <person name="Cebula T.A."/>
        </authorList>
    </citation>
    <scope>NUCLEOTIDE SEQUENCE [LARGE SCALE GENOMIC DNA]</scope>
    <source>
        <strain>SL483</strain>
    </source>
</reference>
<name>YCAR_SALA4</name>
<comment type="similarity">
    <text evidence="1">Belongs to the UPF0434 family.</text>
</comment>
<protein>
    <recommendedName>
        <fullName evidence="1">UPF0434 protein YcaR</fullName>
    </recommendedName>
</protein>
<evidence type="ECO:0000255" key="1">
    <source>
        <dbReference type="HAMAP-Rule" id="MF_01187"/>
    </source>
</evidence>
<sequence>MDHRLLEIIACPVCNGKLWYNQEQQELICKLDNLAFPLRDGIPVLLENEARALTSDESKS</sequence>
<organism>
    <name type="scientific">Salmonella agona (strain SL483)</name>
    <dbReference type="NCBI Taxonomy" id="454166"/>
    <lineage>
        <taxon>Bacteria</taxon>
        <taxon>Pseudomonadati</taxon>
        <taxon>Pseudomonadota</taxon>
        <taxon>Gammaproteobacteria</taxon>
        <taxon>Enterobacterales</taxon>
        <taxon>Enterobacteriaceae</taxon>
        <taxon>Salmonella</taxon>
    </lineage>
</organism>
<gene>
    <name evidence="1" type="primary">ycaR</name>
    <name type="ordered locus">SeAg_B0993</name>
</gene>
<dbReference type="EMBL" id="CP001138">
    <property type="protein sequence ID" value="ACH50848.1"/>
    <property type="molecule type" value="Genomic_DNA"/>
</dbReference>
<dbReference type="RefSeq" id="WP_000350061.1">
    <property type="nucleotide sequence ID" value="NC_011149.1"/>
</dbReference>
<dbReference type="SMR" id="B5F170"/>
<dbReference type="KEGG" id="sea:SeAg_B0993"/>
<dbReference type="HOGENOM" id="CLU_155659_3_1_6"/>
<dbReference type="Proteomes" id="UP000008819">
    <property type="component" value="Chromosome"/>
</dbReference>
<dbReference type="GO" id="GO:0005829">
    <property type="term" value="C:cytosol"/>
    <property type="evidence" value="ECO:0007669"/>
    <property type="project" value="TreeGrafter"/>
</dbReference>
<dbReference type="FunFam" id="2.20.25.10:FF:000002">
    <property type="entry name" value="UPF0434 protein YcaR"/>
    <property type="match status" value="1"/>
</dbReference>
<dbReference type="Gene3D" id="2.20.25.10">
    <property type="match status" value="1"/>
</dbReference>
<dbReference type="HAMAP" id="MF_01187">
    <property type="entry name" value="UPF0434"/>
    <property type="match status" value="1"/>
</dbReference>
<dbReference type="InterPro" id="IPR005651">
    <property type="entry name" value="Trm112-like"/>
</dbReference>
<dbReference type="NCBIfam" id="NF008806">
    <property type="entry name" value="PRK11827.1"/>
    <property type="match status" value="1"/>
</dbReference>
<dbReference type="PANTHER" id="PTHR33505:SF4">
    <property type="entry name" value="PROTEIN PREY, MITOCHONDRIAL"/>
    <property type="match status" value="1"/>
</dbReference>
<dbReference type="PANTHER" id="PTHR33505">
    <property type="entry name" value="ZGC:162634"/>
    <property type="match status" value="1"/>
</dbReference>
<dbReference type="Pfam" id="PF03966">
    <property type="entry name" value="Trm112p"/>
    <property type="match status" value="1"/>
</dbReference>
<dbReference type="SUPFAM" id="SSF158997">
    <property type="entry name" value="Trm112p-like"/>
    <property type="match status" value="1"/>
</dbReference>
<accession>B5F170</accession>